<sequence>MNNRVHQGHLARKRFGQNFLNDQFVIDSIVSAINPQKGQAMVEIGPGLAALTEPVGERLDQLTVIELDRDLAARLQTHPFLGPKLTIYQQDAMTFNFGELAEKMGQPLRVFGNLPYNISTPLMFHLFSYTDAIADMHFMLQKEVVNRLVAGPNSKAYGRLSVMAQYYCNVIPVLEVPPSAFTPPPKVDSAVVRLVPHATMPHPVKDVRVLSRITTEAFNQRRKTIRNSLGNLFSVEVLTGMGIDPAMRAENISVAQYCQMANYLAENATLQES</sequence>
<accession>B6HZ32</accession>
<comment type="function">
    <text evidence="1">Specifically dimethylates two adjacent adenosines (A1518 and A1519) in the loop of a conserved hairpin near the 3'-end of 16S rRNA in the 30S particle. May play a critical role in biogenesis of 30S subunits.</text>
</comment>
<comment type="catalytic activity">
    <reaction evidence="1">
        <text>adenosine(1518)/adenosine(1519) in 16S rRNA + 4 S-adenosyl-L-methionine = N(6)-dimethyladenosine(1518)/N(6)-dimethyladenosine(1519) in 16S rRNA + 4 S-adenosyl-L-homocysteine + 4 H(+)</text>
        <dbReference type="Rhea" id="RHEA:19609"/>
        <dbReference type="Rhea" id="RHEA-COMP:10232"/>
        <dbReference type="Rhea" id="RHEA-COMP:10233"/>
        <dbReference type="ChEBI" id="CHEBI:15378"/>
        <dbReference type="ChEBI" id="CHEBI:57856"/>
        <dbReference type="ChEBI" id="CHEBI:59789"/>
        <dbReference type="ChEBI" id="CHEBI:74411"/>
        <dbReference type="ChEBI" id="CHEBI:74493"/>
        <dbReference type="EC" id="2.1.1.182"/>
    </reaction>
</comment>
<comment type="subcellular location">
    <subcellularLocation>
        <location evidence="1">Cytoplasm</location>
    </subcellularLocation>
</comment>
<comment type="similarity">
    <text evidence="1">Belongs to the class I-like SAM-binding methyltransferase superfamily. rRNA adenine N(6)-methyltransferase family. RsmA subfamily.</text>
</comment>
<proteinExistence type="inferred from homology"/>
<dbReference type="EC" id="2.1.1.182" evidence="1"/>
<dbReference type="EMBL" id="AP009240">
    <property type="protein sequence ID" value="BAG75576.1"/>
    <property type="molecule type" value="Genomic_DNA"/>
</dbReference>
<dbReference type="RefSeq" id="WP_001065382.1">
    <property type="nucleotide sequence ID" value="NC_011415.1"/>
</dbReference>
<dbReference type="SMR" id="B6HZ32"/>
<dbReference type="KEGG" id="ecy:ECSE_0052"/>
<dbReference type="HOGENOM" id="CLU_041220_0_1_6"/>
<dbReference type="Proteomes" id="UP000008199">
    <property type="component" value="Chromosome"/>
</dbReference>
<dbReference type="GO" id="GO:0005829">
    <property type="term" value="C:cytosol"/>
    <property type="evidence" value="ECO:0007669"/>
    <property type="project" value="TreeGrafter"/>
</dbReference>
<dbReference type="GO" id="GO:0052908">
    <property type="term" value="F:16S rRNA (adenine(1518)-N(6)/adenine(1519)-N(6))-dimethyltransferase activity"/>
    <property type="evidence" value="ECO:0007669"/>
    <property type="project" value="UniProtKB-EC"/>
</dbReference>
<dbReference type="GO" id="GO:0003723">
    <property type="term" value="F:RNA binding"/>
    <property type="evidence" value="ECO:0007669"/>
    <property type="project" value="UniProtKB-KW"/>
</dbReference>
<dbReference type="FunFam" id="1.10.8.100:FF:000001">
    <property type="entry name" value="Ribosomal RNA small subunit methyltransferase A"/>
    <property type="match status" value="1"/>
</dbReference>
<dbReference type="FunFam" id="3.40.50.150:FF:000006">
    <property type="entry name" value="Ribosomal RNA small subunit methyltransferase A"/>
    <property type="match status" value="1"/>
</dbReference>
<dbReference type="Gene3D" id="1.10.8.100">
    <property type="entry name" value="Ribosomal RNA adenine dimethylase-like, domain 2"/>
    <property type="match status" value="1"/>
</dbReference>
<dbReference type="Gene3D" id="3.40.50.150">
    <property type="entry name" value="Vaccinia Virus protein VP39"/>
    <property type="match status" value="1"/>
</dbReference>
<dbReference type="HAMAP" id="MF_00607">
    <property type="entry name" value="16SrRNA_methyltr_A"/>
    <property type="match status" value="1"/>
</dbReference>
<dbReference type="InterPro" id="IPR001737">
    <property type="entry name" value="KsgA/Erm"/>
</dbReference>
<dbReference type="InterPro" id="IPR023165">
    <property type="entry name" value="rRNA_Ade_diMease-like_C"/>
</dbReference>
<dbReference type="InterPro" id="IPR020596">
    <property type="entry name" value="rRNA_Ade_Mease_Trfase_CS"/>
</dbReference>
<dbReference type="InterPro" id="IPR020598">
    <property type="entry name" value="rRNA_Ade_methylase_Trfase_N"/>
</dbReference>
<dbReference type="InterPro" id="IPR011530">
    <property type="entry name" value="rRNA_adenine_dimethylase"/>
</dbReference>
<dbReference type="InterPro" id="IPR029063">
    <property type="entry name" value="SAM-dependent_MTases_sf"/>
</dbReference>
<dbReference type="NCBIfam" id="TIGR00755">
    <property type="entry name" value="ksgA"/>
    <property type="match status" value="1"/>
</dbReference>
<dbReference type="PANTHER" id="PTHR11727">
    <property type="entry name" value="DIMETHYLADENOSINE TRANSFERASE"/>
    <property type="match status" value="1"/>
</dbReference>
<dbReference type="PANTHER" id="PTHR11727:SF7">
    <property type="entry name" value="DIMETHYLADENOSINE TRANSFERASE-RELATED"/>
    <property type="match status" value="1"/>
</dbReference>
<dbReference type="Pfam" id="PF00398">
    <property type="entry name" value="RrnaAD"/>
    <property type="match status" value="1"/>
</dbReference>
<dbReference type="SMART" id="SM00650">
    <property type="entry name" value="rADc"/>
    <property type="match status" value="1"/>
</dbReference>
<dbReference type="SUPFAM" id="SSF53335">
    <property type="entry name" value="S-adenosyl-L-methionine-dependent methyltransferases"/>
    <property type="match status" value="1"/>
</dbReference>
<dbReference type="PROSITE" id="PS01131">
    <property type="entry name" value="RRNA_A_DIMETH"/>
    <property type="match status" value="1"/>
</dbReference>
<dbReference type="PROSITE" id="PS51689">
    <property type="entry name" value="SAM_RNA_A_N6_MT"/>
    <property type="match status" value="1"/>
</dbReference>
<gene>
    <name evidence="1" type="primary">rsmA</name>
    <name evidence="1" type="synonym">ksgA</name>
    <name type="ordered locus">ECSE_0052</name>
</gene>
<protein>
    <recommendedName>
        <fullName evidence="1">Ribosomal RNA small subunit methyltransferase A</fullName>
        <ecNumber evidence="1">2.1.1.182</ecNumber>
    </recommendedName>
    <alternativeName>
        <fullName evidence="1">16S rRNA (adenine(1518)-N(6)/adenine(1519)-N(6))-dimethyltransferase</fullName>
    </alternativeName>
    <alternativeName>
        <fullName evidence="1">16S rRNA dimethyladenosine transferase</fullName>
    </alternativeName>
    <alternativeName>
        <fullName evidence="1">16S rRNA dimethylase</fullName>
    </alternativeName>
    <alternativeName>
        <fullName evidence="1">S-adenosylmethionine-6-N', N'-adenosyl(rRNA) dimethyltransferase</fullName>
    </alternativeName>
</protein>
<keyword id="KW-0963">Cytoplasm</keyword>
<keyword id="KW-0489">Methyltransferase</keyword>
<keyword id="KW-0694">RNA-binding</keyword>
<keyword id="KW-0698">rRNA processing</keyword>
<keyword id="KW-0949">S-adenosyl-L-methionine</keyword>
<keyword id="KW-0808">Transferase</keyword>
<reference key="1">
    <citation type="journal article" date="2008" name="DNA Res.">
        <title>Complete genome sequence and comparative analysis of the wild-type commensal Escherichia coli strain SE11 isolated from a healthy adult.</title>
        <authorList>
            <person name="Oshima K."/>
            <person name="Toh H."/>
            <person name="Ogura Y."/>
            <person name="Sasamoto H."/>
            <person name="Morita H."/>
            <person name="Park S.-H."/>
            <person name="Ooka T."/>
            <person name="Iyoda S."/>
            <person name="Taylor T.D."/>
            <person name="Hayashi T."/>
            <person name="Itoh K."/>
            <person name="Hattori M."/>
        </authorList>
    </citation>
    <scope>NUCLEOTIDE SEQUENCE [LARGE SCALE GENOMIC DNA]</scope>
    <source>
        <strain>SE11</strain>
    </source>
</reference>
<evidence type="ECO:0000255" key="1">
    <source>
        <dbReference type="HAMAP-Rule" id="MF_00607"/>
    </source>
</evidence>
<feature type="chain" id="PRO_1000130275" description="Ribosomal RNA small subunit methyltransferase A">
    <location>
        <begin position="1"/>
        <end position="273"/>
    </location>
</feature>
<feature type="binding site" evidence="1">
    <location>
        <position position="18"/>
    </location>
    <ligand>
        <name>S-adenosyl-L-methionine</name>
        <dbReference type="ChEBI" id="CHEBI:59789"/>
    </ligand>
</feature>
<feature type="binding site" evidence="1">
    <location>
        <position position="20"/>
    </location>
    <ligand>
        <name>S-adenosyl-L-methionine</name>
        <dbReference type="ChEBI" id="CHEBI:59789"/>
    </ligand>
</feature>
<feature type="binding site" evidence="1">
    <location>
        <position position="45"/>
    </location>
    <ligand>
        <name>S-adenosyl-L-methionine</name>
        <dbReference type="ChEBI" id="CHEBI:59789"/>
    </ligand>
</feature>
<feature type="binding site" evidence="1">
    <location>
        <position position="66"/>
    </location>
    <ligand>
        <name>S-adenosyl-L-methionine</name>
        <dbReference type="ChEBI" id="CHEBI:59789"/>
    </ligand>
</feature>
<feature type="binding site" evidence="1">
    <location>
        <position position="91"/>
    </location>
    <ligand>
        <name>S-adenosyl-L-methionine</name>
        <dbReference type="ChEBI" id="CHEBI:59789"/>
    </ligand>
</feature>
<feature type="binding site" evidence="1">
    <location>
        <position position="113"/>
    </location>
    <ligand>
        <name>S-adenosyl-L-methionine</name>
        <dbReference type="ChEBI" id="CHEBI:59789"/>
    </ligand>
</feature>
<organism>
    <name type="scientific">Escherichia coli (strain SE11)</name>
    <dbReference type="NCBI Taxonomy" id="409438"/>
    <lineage>
        <taxon>Bacteria</taxon>
        <taxon>Pseudomonadati</taxon>
        <taxon>Pseudomonadota</taxon>
        <taxon>Gammaproteobacteria</taxon>
        <taxon>Enterobacterales</taxon>
        <taxon>Enterobacteriaceae</taxon>
        <taxon>Escherichia</taxon>
    </lineage>
</organism>
<name>RSMA_ECOSE</name>